<sequence length="288" mass="33540">MKYVFIEKHQAEFSIKAMCRVLRVARSGWYTWCQRRTRISTRQQFRQHCDSVVLAAFTRSKQRYGAPRLTDELRAQGYPFNVKTVAASLRRQGLRAKASRKFSPVSYRAHGLPVSENLLEQDFYASGPNQKWAGDITYLRTDEGWLYLAVVIDLWSRAVIGWSMSPRMTAQLACDALQMALWRRKRPRNVIVHTDRGGQYCSADYQAQLKRHNLRGSMSAKGCCYDNACVESFFHSLKVECIHGEHFISREIMRATVFNYIECDYNRWRRHSWCGGLSPEQFENKNLA</sequence>
<evidence type="ECO:0000255" key="1">
    <source>
        <dbReference type="PROSITE-ProRule" id="PRU00457"/>
    </source>
</evidence>
<evidence type="ECO:0000305" key="2"/>
<dbReference type="EMBL" id="U73857">
    <property type="protein sequence ID" value="AAB18095.1"/>
    <property type="molecule type" value="Genomic_DNA"/>
</dbReference>
<dbReference type="EMBL" id="U00096">
    <property type="protein sequence ID" value="AAC73475.1"/>
    <property type="molecule type" value="Genomic_DNA"/>
</dbReference>
<dbReference type="EMBL" id="AP009048">
    <property type="protein sequence ID" value="BAE76153.1"/>
    <property type="molecule type" value="Genomic_DNA"/>
</dbReference>
<dbReference type="PIR" id="C64756">
    <property type="entry name" value="TQECI3"/>
</dbReference>
<dbReference type="RefSeq" id="NP_061381.1">
    <property type="nucleotide sequence ID" value="NC_002483.1"/>
</dbReference>
<dbReference type="RefSeq" id="NP_414906.1">
    <property type="nucleotide sequence ID" value="NC_000913.3"/>
</dbReference>
<dbReference type="SMR" id="P0CF80"/>
<dbReference type="FunCoup" id="P0CF80">
    <property type="interactions" value="11"/>
</dbReference>
<dbReference type="EnsemblBacteria" id="AAC73475">
    <property type="protein sequence ID" value="AAC73475"/>
    <property type="gene ID" value="b0372"/>
</dbReference>
<dbReference type="GeneID" id="945036"/>
<dbReference type="KEGG" id="ecj:JW0363"/>
<dbReference type="KEGG" id="eco:b0299"/>
<dbReference type="KEGG" id="eco:b0372"/>
<dbReference type="KEGG" id="eco:b0541"/>
<dbReference type="KEGG" id="eco:b1026"/>
<dbReference type="KEGG" id="eco:b2089"/>
<dbReference type="KEGG" id="ecoc:C3026_01470"/>
<dbReference type="KEGG" id="ecoc:C3026_02660"/>
<dbReference type="KEGG" id="ecoc:C3026_06250"/>
<dbReference type="KEGG" id="ecoc:C3026_11730"/>
<dbReference type="KEGG" id="ecoc:C3026_24100"/>
<dbReference type="KEGG" id="ecoc:C3026_24645"/>
<dbReference type="EchoBASE" id="EB4716"/>
<dbReference type="HOGENOM" id="CLU_027402_4_2_6"/>
<dbReference type="InParanoid" id="P0CF80"/>
<dbReference type="OMA" id="DNARCES"/>
<dbReference type="PhylomeDB" id="P0CF80"/>
<dbReference type="BioCyc" id="EcoCyc:MONOMER0-4441"/>
<dbReference type="PRO" id="PR:P0CF80"/>
<dbReference type="Proteomes" id="UP000000625">
    <property type="component" value="Chromosome"/>
</dbReference>
<dbReference type="GO" id="GO:0003677">
    <property type="term" value="F:DNA binding"/>
    <property type="evidence" value="ECO:0007669"/>
    <property type="project" value="UniProtKB-KW"/>
</dbReference>
<dbReference type="GO" id="GO:0015074">
    <property type="term" value="P:DNA integration"/>
    <property type="evidence" value="ECO:0007669"/>
    <property type="project" value="InterPro"/>
</dbReference>
<dbReference type="GO" id="GO:0006310">
    <property type="term" value="P:DNA recombination"/>
    <property type="evidence" value="ECO:0007669"/>
    <property type="project" value="UniProtKB-KW"/>
</dbReference>
<dbReference type="GO" id="GO:0032196">
    <property type="term" value="P:transposition"/>
    <property type="evidence" value="ECO:0007669"/>
    <property type="project" value="UniProtKB-KW"/>
</dbReference>
<dbReference type="FunFam" id="3.30.420.10:FF:000030">
    <property type="entry name" value="IS3, transposase orfB"/>
    <property type="match status" value="1"/>
</dbReference>
<dbReference type="Gene3D" id="3.30.420.10">
    <property type="entry name" value="Ribonuclease H-like superfamily/Ribonuclease H"/>
    <property type="match status" value="1"/>
</dbReference>
<dbReference type="InterPro" id="IPR025948">
    <property type="entry name" value="HTH-like_dom"/>
</dbReference>
<dbReference type="InterPro" id="IPR001584">
    <property type="entry name" value="Integrase_cat-core"/>
</dbReference>
<dbReference type="InterPro" id="IPR012337">
    <property type="entry name" value="RNaseH-like_sf"/>
</dbReference>
<dbReference type="InterPro" id="IPR036397">
    <property type="entry name" value="RNaseH_sf"/>
</dbReference>
<dbReference type="InterPro" id="IPR048020">
    <property type="entry name" value="Transpos_IS3"/>
</dbReference>
<dbReference type="InterPro" id="IPR050900">
    <property type="entry name" value="Transposase_IS3/IS150/IS904"/>
</dbReference>
<dbReference type="NCBIfam" id="NF033516">
    <property type="entry name" value="transpos_IS3"/>
    <property type="match status" value="1"/>
</dbReference>
<dbReference type="PANTHER" id="PTHR46889:SF6">
    <property type="entry name" value="TRANSPOSASE INSF FOR INSERTION SEQUENCE IS3B"/>
    <property type="match status" value="1"/>
</dbReference>
<dbReference type="PANTHER" id="PTHR46889">
    <property type="entry name" value="TRANSPOSASE INSF FOR INSERTION SEQUENCE IS3B-RELATED"/>
    <property type="match status" value="1"/>
</dbReference>
<dbReference type="Pfam" id="PF13276">
    <property type="entry name" value="HTH_21"/>
    <property type="match status" value="1"/>
</dbReference>
<dbReference type="Pfam" id="PF00665">
    <property type="entry name" value="rve"/>
    <property type="match status" value="1"/>
</dbReference>
<dbReference type="Pfam" id="PF13333">
    <property type="entry name" value="rve_2"/>
    <property type="match status" value="1"/>
</dbReference>
<dbReference type="SUPFAM" id="SSF53098">
    <property type="entry name" value="Ribonuclease H-like"/>
    <property type="match status" value="1"/>
</dbReference>
<dbReference type="PROSITE" id="PS50994">
    <property type="entry name" value="INTEGRASE"/>
    <property type="match status" value="1"/>
</dbReference>
<proteinExistence type="inferred from homology"/>
<keyword id="KW-0233">DNA recombination</keyword>
<keyword id="KW-0238">DNA-binding</keyword>
<keyword id="KW-1185">Reference proteome</keyword>
<keyword id="KW-0814">Transposable element</keyword>
<keyword id="KW-0815">Transposition</keyword>
<name>INSF2_ECOLI</name>
<comment type="function">
    <text>Involved in the transposition of the insertion sequence IS3.</text>
</comment>
<comment type="similarity">
    <text evidence="2">Belongs to the transposase IS3/IS150/IS904 family.</text>
</comment>
<reference key="1">
    <citation type="submission" date="1997-01" db="EMBL/GenBank/DDBJ databases">
        <title>Sequence of minutes 4-25 of Escherichia coli.</title>
        <authorList>
            <person name="Chung E."/>
            <person name="Allen E."/>
            <person name="Araujo R."/>
            <person name="Aparicio A.M."/>
            <person name="Davis K."/>
            <person name="Duncan M."/>
            <person name="Federspiel N."/>
            <person name="Hyman R."/>
            <person name="Kalman S."/>
            <person name="Komp C."/>
            <person name="Kurdi O."/>
            <person name="Lew H."/>
            <person name="Lin D."/>
            <person name="Namath A."/>
            <person name="Oefner P."/>
            <person name="Roberts D."/>
            <person name="Schramm S."/>
            <person name="Davis R.W."/>
        </authorList>
    </citation>
    <scope>NUCLEOTIDE SEQUENCE [LARGE SCALE GENOMIC DNA]</scope>
    <source>
        <strain>K12 / MG1655 / ATCC 47076</strain>
    </source>
</reference>
<reference key="2">
    <citation type="journal article" date="1997" name="Science">
        <title>The complete genome sequence of Escherichia coli K-12.</title>
        <authorList>
            <person name="Blattner F.R."/>
            <person name="Plunkett G. III"/>
            <person name="Bloch C.A."/>
            <person name="Perna N.T."/>
            <person name="Burland V."/>
            <person name="Riley M."/>
            <person name="Collado-Vides J."/>
            <person name="Glasner J.D."/>
            <person name="Rode C.K."/>
            <person name="Mayhew G.F."/>
            <person name="Gregor J."/>
            <person name="Davis N.W."/>
            <person name="Kirkpatrick H.A."/>
            <person name="Goeden M.A."/>
            <person name="Rose D.J."/>
            <person name="Mau B."/>
            <person name="Shao Y."/>
        </authorList>
    </citation>
    <scope>NUCLEOTIDE SEQUENCE [LARGE SCALE GENOMIC DNA]</scope>
    <source>
        <strain>K12 / MG1655 / ATCC 47076</strain>
    </source>
</reference>
<reference key="3">
    <citation type="journal article" date="2006" name="Mol. Syst. Biol.">
        <title>Highly accurate genome sequences of Escherichia coli K-12 strains MG1655 and W3110.</title>
        <authorList>
            <person name="Hayashi K."/>
            <person name="Morooka N."/>
            <person name="Yamamoto Y."/>
            <person name="Fujita K."/>
            <person name="Isono K."/>
            <person name="Choi S."/>
            <person name="Ohtsubo E."/>
            <person name="Baba T."/>
            <person name="Wanner B.L."/>
            <person name="Mori H."/>
            <person name="Horiuchi T."/>
        </authorList>
    </citation>
    <scope>NUCLEOTIDE SEQUENCE [LARGE SCALE GENOMIC DNA]</scope>
    <source>
        <strain>K12 / W3110 / ATCC 27325 / DSM 5911</strain>
    </source>
</reference>
<organism>
    <name type="scientific">Escherichia coli (strain K12)</name>
    <dbReference type="NCBI Taxonomy" id="83333"/>
    <lineage>
        <taxon>Bacteria</taxon>
        <taxon>Pseudomonadati</taxon>
        <taxon>Pseudomonadota</taxon>
        <taxon>Gammaproteobacteria</taxon>
        <taxon>Enterobacterales</taxon>
        <taxon>Enterobacteriaceae</taxon>
        <taxon>Escherichia</taxon>
    </lineage>
</organism>
<protein>
    <recommendedName>
        <fullName>Transposase InsF for insertion sequence IS3B</fullName>
    </recommendedName>
</protein>
<feature type="chain" id="PRO_0000394034" description="Transposase InsF for insertion sequence IS3B">
    <location>
        <begin position="1"/>
        <end position="288"/>
    </location>
</feature>
<feature type="domain" description="Integrase catalytic" evidence="1">
    <location>
        <begin position="124"/>
        <end position="287"/>
    </location>
</feature>
<accession>P0CF80</accession>
<accession>O08009</accession>
<accession>O08012</accession>
<accession>O08304</accession>
<accession>P05822</accession>
<accession>P77673</accession>
<accession>Q2MBI8</accession>
<gene>
    <name type="primary">insF2</name>
    <name type="ordered locus">b0372</name>
    <name type="ordered locus">JW0363</name>
</gene>